<proteinExistence type="evidence at transcript level"/>
<gene>
    <name type="ordered locus">At1g20300</name>
    <name type="ORF">F14O10.10</name>
</gene>
<dbReference type="EMBL" id="AC026234">
    <property type="protein sequence ID" value="AAF88159.1"/>
    <property type="molecule type" value="Genomic_DNA"/>
</dbReference>
<dbReference type="EMBL" id="CP002684">
    <property type="protein sequence ID" value="AEE29959.1"/>
    <property type="molecule type" value="Genomic_DNA"/>
</dbReference>
<dbReference type="EMBL" id="AF446865">
    <property type="protein sequence ID" value="AAL38598.1"/>
    <property type="molecule type" value="mRNA"/>
</dbReference>
<dbReference type="EMBL" id="AY052274">
    <property type="protein sequence ID" value="AAK96467.1"/>
    <property type="molecule type" value="mRNA"/>
</dbReference>
<dbReference type="PIR" id="F86336">
    <property type="entry name" value="F86336"/>
</dbReference>
<dbReference type="RefSeq" id="NP_564110.1">
    <property type="nucleotide sequence ID" value="NM_101881.3"/>
</dbReference>
<dbReference type="SMR" id="Q9LN22"/>
<dbReference type="FunCoup" id="Q9LN22">
    <property type="interactions" value="848"/>
</dbReference>
<dbReference type="STRING" id="3702.Q9LN22"/>
<dbReference type="PaxDb" id="3702-AT1G20300.1"/>
<dbReference type="ProteomicsDB" id="234893"/>
<dbReference type="EnsemblPlants" id="AT1G20300.1">
    <property type="protein sequence ID" value="AT1G20300.1"/>
    <property type="gene ID" value="AT1G20300"/>
</dbReference>
<dbReference type="GeneID" id="838618"/>
<dbReference type="Gramene" id="AT1G20300.1">
    <property type="protein sequence ID" value="AT1G20300.1"/>
    <property type="gene ID" value="AT1G20300"/>
</dbReference>
<dbReference type="KEGG" id="ath:AT1G20300"/>
<dbReference type="Araport" id="AT1G20300"/>
<dbReference type="TAIR" id="AT1G20300"/>
<dbReference type="eggNOG" id="KOG4197">
    <property type="taxonomic scope" value="Eukaryota"/>
</dbReference>
<dbReference type="HOGENOM" id="CLU_002706_49_0_1"/>
<dbReference type="InParanoid" id="Q9LN22"/>
<dbReference type="OMA" id="GAHRMYA"/>
<dbReference type="PhylomeDB" id="Q9LN22"/>
<dbReference type="PRO" id="PR:Q9LN22"/>
<dbReference type="Proteomes" id="UP000006548">
    <property type="component" value="Chromosome 1"/>
</dbReference>
<dbReference type="ExpressionAtlas" id="Q9LN22">
    <property type="expression patterns" value="baseline and differential"/>
</dbReference>
<dbReference type="GO" id="GO:0005739">
    <property type="term" value="C:mitochondrion"/>
    <property type="evidence" value="ECO:0007005"/>
    <property type="project" value="TAIR"/>
</dbReference>
<dbReference type="FunFam" id="1.25.40.10:FF:001480">
    <property type="entry name" value="Pentatricopeptide repeat-containing protein"/>
    <property type="match status" value="1"/>
</dbReference>
<dbReference type="Gene3D" id="1.25.40.10">
    <property type="entry name" value="Tetratricopeptide repeat domain"/>
    <property type="match status" value="4"/>
</dbReference>
<dbReference type="InterPro" id="IPR002885">
    <property type="entry name" value="Pentatricopeptide_rpt"/>
</dbReference>
<dbReference type="InterPro" id="IPR011990">
    <property type="entry name" value="TPR-like_helical_dom_sf"/>
</dbReference>
<dbReference type="NCBIfam" id="TIGR00756">
    <property type="entry name" value="PPR"/>
    <property type="match status" value="9"/>
</dbReference>
<dbReference type="PANTHER" id="PTHR47936:SF1">
    <property type="entry name" value="PENTATRICOPEPTIDE REPEAT-CONTAINING PROTEIN GUN1, CHLOROPLASTIC"/>
    <property type="match status" value="1"/>
</dbReference>
<dbReference type="PANTHER" id="PTHR47936">
    <property type="entry name" value="PPR_LONG DOMAIN-CONTAINING PROTEIN"/>
    <property type="match status" value="1"/>
</dbReference>
<dbReference type="Pfam" id="PF01535">
    <property type="entry name" value="PPR"/>
    <property type="match status" value="1"/>
</dbReference>
<dbReference type="Pfam" id="PF12854">
    <property type="entry name" value="PPR_1"/>
    <property type="match status" value="1"/>
</dbReference>
<dbReference type="Pfam" id="PF13041">
    <property type="entry name" value="PPR_2"/>
    <property type="match status" value="4"/>
</dbReference>
<dbReference type="SUPFAM" id="SSF48452">
    <property type="entry name" value="TPR-like"/>
    <property type="match status" value="1"/>
</dbReference>
<dbReference type="PROSITE" id="PS51375">
    <property type="entry name" value="PPR"/>
    <property type="match status" value="11"/>
</dbReference>
<accession>Q9LN22</accession>
<feature type="transit peptide" description="Mitochondrion" evidence="1">
    <location>
        <begin position="1"/>
        <end position="32"/>
    </location>
</feature>
<feature type="chain" id="PRO_0000342795" description="Pentatricopeptide repeat-containing protein At1g20300, mitochondrial">
    <location>
        <begin position="33"/>
        <end position="537"/>
    </location>
</feature>
<feature type="repeat" description="PPR 1">
    <location>
        <begin position="150"/>
        <end position="184"/>
    </location>
</feature>
<feature type="repeat" description="PPR 2">
    <location>
        <begin position="185"/>
        <end position="219"/>
    </location>
</feature>
<feature type="repeat" description="PPR 3">
    <location>
        <begin position="220"/>
        <end position="250"/>
    </location>
</feature>
<feature type="repeat" description="PPR 4">
    <location>
        <begin position="254"/>
        <end position="288"/>
    </location>
</feature>
<feature type="repeat" description="PPR 5">
    <location>
        <begin position="289"/>
        <end position="323"/>
    </location>
</feature>
<feature type="repeat" description="PPR 6">
    <location>
        <begin position="324"/>
        <end position="358"/>
    </location>
</feature>
<feature type="repeat" description="PPR 7">
    <location>
        <begin position="359"/>
        <end position="393"/>
    </location>
</feature>
<feature type="repeat" description="PPR 8">
    <location>
        <begin position="394"/>
        <end position="428"/>
    </location>
</feature>
<feature type="repeat" description="PPR 9">
    <location>
        <begin position="429"/>
        <end position="463"/>
    </location>
</feature>
<feature type="repeat" description="PPR 10">
    <location>
        <begin position="464"/>
        <end position="498"/>
    </location>
</feature>
<feature type="repeat" description="PPR 11">
    <location>
        <begin position="500"/>
        <end position="534"/>
    </location>
</feature>
<protein>
    <recommendedName>
        <fullName>Pentatricopeptide repeat-containing protein At1g20300, mitochondrial</fullName>
    </recommendedName>
</protein>
<keyword id="KW-0496">Mitochondrion</keyword>
<keyword id="KW-1185">Reference proteome</keyword>
<keyword id="KW-0677">Repeat</keyword>
<keyword id="KW-0809">Transit peptide</keyword>
<organism>
    <name type="scientific">Arabidopsis thaliana</name>
    <name type="common">Mouse-ear cress</name>
    <dbReference type="NCBI Taxonomy" id="3702"/>
    <lineage>
        <taxon>Eukaryota</taxon>
        <taxon>Viridiplantae</taxon>
        <taxon>Streptophyta</taxon>
        <taxon>Embryophyta</taxon>
        <taxon>Tracheophyta</taxon>
        <taxon>Spermatophyta</taxon>
        <taxon>Magnoliopsida</taxon>
        <taxon>eudicotyledons</taxon>
        <taxon>Gunneridae</taxon>
        <taxon>Pentapetalae</taxon>
        <taxon>rosids</taxon>
        <taxon>malvids</taxon>
        <taxon>Brassicales</taxon>
        <taxon>Brassicaceae</taxon>
        <taxon>Camelineae</taxon>
        <taxon>Arabidopsis</taxon>
    </lineage>
</organism>
<evidence type="ECO:0000255" key="1"/>
<evidence type="ECO:0000305" key="2"/>
<reference key="1">
    <citation type="journal article" date="2000" name="Nature">
        <title>Sequence and analysis of chromosome 1 of the plant Arabidopsis thaliana.</title>
        <authorList>
            <person name="Theologis A."/>
            <person name="Ecker J.R."/>
            <person name="Palm C.J."/>
            <person name="Federspiel N.A."/>
            <person name="Kaul S."/>
            <person name="White O."/>
            <person name="Alonso J."/>
            <person name="Altafi H."/>
            <person name="Araujo R."/>
            <person name="Bowman C.L."/>
            <person name="Brooks S.Y."/>
            <person name="Buehler E."/>
            <person name="Chan A."/>
            <person name="Chao Q."/>
            <person name="Chen H."/>
            <person name="Cheuk R.F."/>
            <person name="Chin C.W."/>
            <person name="Chung M.K."/>
            <person name="Conn L."/>
            <person name="Conway A.B."/>
            <person name="Conway A.R."/>
            <person name="Creasy T.H."/>
            <person name="Dewar K."/>
            <person name="Dunn P."/>
            <person name="Etgu P."/>
            <person name="Feldblyum T.V."/>
            <person name="Feng J.-D."/>
            <person name="Fong B."/>
            <person name="Fujii C.Y."/>
            <person name="Gill J.E."/>
            <person name="Goldsmith A.D."/>
            <person name="Haas B."/>
            <person name="Hansen N.F."/>
            <person name="Hughes B."/>
            <person name="Huizar L."/>
            <person name="Hunter J.L."/>
            <person name="Jenkins J."/>
            <person name="Johnson-Hopson C."/>
            <person name="Khan S."/>
            <person name="Khaykin E."/>
            <person name="Kim C.J."/>
            <person name="Koo H.L."/>
            <person name="Kremenetskaia I."/>
            <person name="Kurtz D.B."/>
            <person name="Kwan A."/>
            <person name="Lam B."/>
            <person name="Langin-Hooper S."/>
            <person name="Lee A."/>
            <person name="Lee J.M."/>
            <person name="Lenz C.A."/>
            <person name="Li J.H."/>
            <person name="Li Y.-P."/>
            <person name="Lin X."/>
            <person name="Liu S.X."/>
            <person name="Liu Z.A."/>
            <person name="Luros J.S."/>
            <person name="Maiti R."/>
            <person name="Marziali A."/>
            <person name="Militscher J."/>
            <person name="Miranda M."/>
            <person name="Nguyen M."/>
            <person name="Nierman W.C."/>
            <person name="Osborne B.I."/>
            <person name="Pai G."/>
            <person name="Peterson J."/>
            <person name="Pham P.K."/>
            <person name="Rizzo M."/>
            <person name="Rooney T."/>
            <person name="Rowley D."/>
            <person name="Sakano H."/>
            <person name="Salzberg S.L."/>
            <person name="Schwartz J.R."/>
            <person name="Shinn P."/>
            <person name="Southwick A.M."/>
            <person name="Sun H."/>
            <person name="Tallon L.J."/>
            <person name="Tambunga G."/>
            <person name="Toriumi M.J."/>
            <person name="Town C.D."/>
            <person name="Utterback T."/>
            <person name="Van Aken S."/>
            <person name="Vaysberg M."/>
            <person name="Vysotskaia V.S."/>
            <person name="Walker M."/>
            <person name="Wu D."/>
            <person name="Yu G."/>
            <person name="Fraser C.M."/>
            <person name="Venter J.C."/>
            <person name="Davis R.W."/>
        </authorList>
    </citation>
    <scope>NUCLEOTIDE SEQUENCE [LARGE SCALE GENOMIC DNA]</scope>
    <source>
        <strain>cv. Columbia</strain>
    </source>
</reference>
<reference key="2">
    <citation type="journal article" date="2017" name="Plant J.">
        <title>Araport11: a complete reannotation of the Arabidopsis thaliana reference genome.</title>
        <authorList>
            <person name="Cheng C.Y."/>
            <person name="Krishnakumar V."/>
            <person name="Chan A.P."/>
            <person name="Thibaud-Nissen F."/>
            <person name="Schobel S."/>
            <person name="Town C.D."/>
        </authorList>
    </citation>
    <scope>GENOME REANNOTATION</scope>
    <source>
        <strain>cv. Columbia</strain>
    </source>
</reference>
<reference key="3">
    <citation type="journal article" date="2003" name="Science">
        <title>Empirical analysis of transcriptional activity in the Arabidopsis genome.</title>
        <authorList>
            <person name="Yamada K."/>
            <person name="Lim J."/>
            <person name="Dale J.M."/>
            <person name="Chen H."/>
            <person name="Shinn P."/>
            <person name="Palm C.J."/>
            <person name="Southwick A.M."/>
            <person name="Wu H.C."/>
            <person name="Kim C.J."/>
            <person name="Nguyen M."/>
            <person name="Pham P.K."/>
            <person name="Cheuk R.F."/>
            <person name="Karlin-Newmann G."/>
            <person name="Liu S.X."/>
            <person name="Lam B."/>
            <person name="Sakano H."/>
            <person name="Wu T."/>
            <person name="Yu G."/>
            <person name="Miranda M."/>
            <person name="Quach H.L."/>
            <person name="Tripp M."/>
            <person name="Chang C.H."/>
            <person name="Lee J.M."/>
            <person name="Toriumi M.J."/>
            <person name="Chan M.M."/>
            <person name="Tang C.C."/>
            <person name="Onodera C.S."/>
            <person name="Deng J.M."/>
            <person name="Akiyama K."/>
            <person name="Ansari Y."/>
            <person name="Arakawa T."/>
            <person name="Banh J."/>
            <person name="Banno F."/>
            <person name="Bowser L."/>
            <person name="Brooks S.Y."/>
            <person name="Carninci P."/>
            <person name="Chao Q."/>
            <person name="Choy N."/>
            <person name="Enju A."/>
            <person name="Goldsmith A.D."/>
            <person name="Gurjal M."/>
            <person name="Hansen N.F."/>
            <person name="Hayashizaki Y."/>
            <person name="Johnson-Hopson C."/>
            <person name="Hsuan V.W."/>
            <person name="Iida K."/>
            <person name="Karnes M."/>
            <person name="Khan S."/>
            <person name="Koesema E."/>
            <person name="Ishida J."/>
            <person name="Jiang P.X."/>
            <person name="Jones T."/>
            <person name="Kawai J."/>
            <person name="Kamiya A."/>
            <person name="Meyers C."/>
            <person name="Nakajima M."/>
            <person name="Narusaka M."/>
            <person name="Seki M."/>
            <person name="Sakurai T."/>
            <person name="Satou M."/>
            <person name="Tamse R."/>
            <person name="Vaysberg M."/>
            <person name="Wallender E.K."/>
            <person name="Wong C."/>
            <person name="Yamamura Y."/>
            <person name="Yuan S."/>
            <person name="Shinozaki K."/>
            <person name="Davis R.W."/>
            <person name="Theologis A."/>
            <person name="Ecker J.R."/>
        </authorList>
    </citation>
    <scope>NUCLEOTIDE SEQUENCE [LARGE SCALE MRNA]</scope>
    <source>
        <strain>cv. Columbia</strain>
    </source>
</reference>
<reference key="4">
    <citation type="journal article" date="2004" name="Plant Cell">
        <title>Genome-wide analysis of Arabidopsis pentatricopeptide repeat proteins reveals their essential role in organelle biogenesis.</title>
        <authorList>
            <person name="Lurin C."/>
            <person name="Andres C."/>
            <person name="Aubourg S."/>
            <person name="Bellaoui M."/>
            <person name="Bitton F."/>
            <person name="Bruyere C."/>
            <person name="Caboche M."/>
            <person name="Debast C."/>
            <person name="Gualberto J."/>
            <person name="Hoffmann B."/>
            <person name="Lecharny A."/>
            <person name="Le Ret M."/>
            <person name="Martin-Magniette M.-L."/>
            <person name="Mireau H."/>
            <person name="Peeters N."/>
            <person name="Renou J.-P."/>
            <person name="Szurek B."/>
            <person name="Taconnat L."/>
            <person name="Small I."/>
        </authorList>
    </citation>
    <scope>GENE FAMILY</scope>
</reference>
<comment type="subcellular location">
    <subcellularLocation>
        <location evidence="2">Mitochondrion</location>
    </subcellularLocation>
</comment>
<comment type="similarity">
    <text evidence="2">Belongs to the PPR family. P subfamily.</text>
</comment>
<comment type="online information" name="Pentatricopeptide repeat proteins">
    <link uri="https://ppr.plantenergy.uwa.edu.au"/>
</comment>
<sequence length="537" mass="61208">MALLRSKLHLSRTLSFISPLLPKTFSTSATSLLSDHENDESAATITAAVSVPISPLLTPEDTQTVEKFHSIIKDHYRKNPTSPNDAILNPSLTLHALSLDFSQIETSQVSPSVVRCVIEKCGSVRHGIPLHQSLAFFNWATSRDDYDHKSPHPYNEMIDLSGKVRQFDLAWHLIDLMKSRNVEISIETFTILIRRYVRAGLASEAVHCFNRMEDYGCVPDKIAFSIVISNLSRKRRASEAQSFFDSLKDRFEPDVIVYTNLVRGWCRAGEISEAEKVFKEMKLAGIEPNVYTYSIVIDALCRCGQISRAHDVFADMLDSGCAPNAITFNNLMRVHVKAGRTEKVLQVYNQMKKLGCEPDTITYNFLIEAHCRDENLENAVKVLNTMIKKKCEVNASTFNTIFRYIEKKRDVNGAHRMYSKMMEAKCEPNTVTYNILMRMFVGSKSTDMVLKMKKEMDDKEVEPNVNTYRLLVTMFCGMGHWNNAYKLFKEMVEEKCLTPSLSLYEMVLAQLRRAGQLKKHEELVEKMIQKGLVARPL</sequence>
<name>PPR54_ARATH</name>